<evidence type="ECO:0000255" key="1"/>
<evidence type="ECO:0000269" key="2">
    <source>
    </source>
</evidence>
<evidence type="ECO:0000269" key="3">
    <source>
    </source>
</evidence>
<evidence type="ECO:0000269" key="4">
    <source>
    </source>
</evidence>
<evidence type="ECO:0000269" key="5">
    <source>
    </source>
</evidence>
<evidence type="ECO:0000269" key="6">
    <source>
    </source>
</evidence>
<evidence type="ECO:0000269" key="7">
    <source>
    </source>
</evidence>
<evidence type="ECO:0000269" key="8">
    <source>
    </source>
</evidence>
<evidence type="ECO:0000269" key="9">
    <source>
    </source>
</evidence>
<evidence type="ECO:0000269" key="10">
    <source>
    </source>
</evidence>
<evidence type="ECO:0000269" key="11">
    <source>
    </source>
</evidence>
<evidence type="ECO:0000269" key="12">
    <source>
    </source>
</evidence>
<evidence type="ECO:0000269" key="13">
    <source>
    </source>
</evidence>
<evidence type="ECO:0000269" key="14">
    <source>
    </source>
</evidence>
<evidence type="ECO:0000269" key="15">
    <source ref="3"/>
</evidence>
<evidence type="ECO:0000305" key="16"/>
<evidence type="ECO:0007829" key="17">
    <source>
        <dbReference type="PDB" id="1BV8"/>
    </source>
</evidence>
<evidence type="ECO:0007829" key="18">
    <source>
        <dbReference type="PDB" id="2P9R"/>
    </source>
</evidence>
<protein>
    <recommendedName>
        <fullName>Alpha-2-macroglobulin</fullName>
        <shortName>Alpha-2-M</shortName>
    </recommendedName>
    <alternativeName>
        <fullName>C3 and PZP-like alpha-2-macroglobulin domain-containing protein 5</fullName>
    </alternativeName>
</protein>
<sequence>MGKNKLLHPSLVLLLLVLLPTDASVSGKPQYMVLVPSLLHTETTEKGCVLLSYLNETVTVSASLESVRGNRSLFTDLEAENDVLHCVAFAVPKSSSNEEVMFLTVQVKGPTQEFKKRTTVMVKNEDSLVFVQTDKSIYKPGQTVKFRVVSMDENFHPLNELIPLVYIQDPKGNRIAQWQSFQLEGGLKQFSFPLSSEPFQGSYKVVVQKKSGGRTEHPFTVEEFVLPKFEVQVTVPKIITILEEEMNVSVCGLYTYGKPVPGHVTVSICRKYSDASDCHGEDSQAFCEKFSGQLNSHGCFYQQVKTKVFQLKRKEYEMKLHTEAQIQEEGTVVELTGRQSSEITRTITKLSFVKVDSHFRQGIPFFGQVRLVDGKGVPIPNKVIFIRGNEANYYSNATTDEHGLVQFSINTTNVMGTSLTVRVNYKDRSPCYGYQWVSEEHEEAHHTAYLVFSPSKSFVHLEPMSHELPCGHTQTVQAHYILNGGTLLGLKKLSFYYLIMAKGGIVRTGTHGLLVKQEDMKGHFSISIPVKSDIAPVARLLIYAVLPTGDVIGDSAKYDVENCLANKVDLSFSPSQSLPASHAHLRVTAAPQSVCALRAVDQSVLLMKPDAELSASSVYNLLPEKDLTGFPGPLNDQDNEDCINRHNVYINGITYTPVSSTNEKDMYSFLEDMGLKAFTNSKIRKPKMCPQLQQYEMHGPEGLRVGFYESDVMGRGHARLVHVEEPHTETVRKYFPETWIWDLVVVNSAGVAEVGVTVPDTITEWKAGAFCLSEDAGLGISSTASLRAFQPFFVELTMPYSVIRGEAFTLKATVLNYLPKCIRVSVQLEASPAFLAVPVEKEQAPHCICANGRQTVSWAVTPKSLGNVNFTVSAEALESQELCGTEVPSVPEHGRKDTVIKPLLVEPEGLEKETTFNSLLCPSGGEVSEELSLKLPPNVVEESARASVSVLGDILGSAMQNTQNLLQMPYGCGEQNMVLFAPNIYVLDYLNETQQLTPEIKSKAIGYLNTGYQRQLNYKHYDGSYSTFGERYGRNQGNTWLTAFVLKTFAQARAYIFIDEAHITQALIWLSQRQKDNGCFRSSGSLLNNAIKGGVEDEVTLSAYITIALLEIPLTVTHPVVRNALFCLESAWKTAQEGDHGSHVYTKALLAYAFALAGNQDKRKEVLKSLNEEAVKKDNSVHWERPQKPKAPVGHFYEPQAPSAEVEMTSYVLLAYLTAQPAPTSEDLTSATNIVKWITKQQNAQGGFSSTQDTVVALHALSKYGAATFTRTGKAAQVTIQSSGTFSSKFQVDNNNRLLLQQVSLPELPGEYSMKVTGEGCVYLQTSLKYNILPEKEEFPFALGVQTLPQTCDEPKAHTSFQISLSVSYTGSRSASNMAIVDVKMVSGFIPLKPTVKMLERSNHVSRTEVSSNHVLIYLDKVSNQTLSLFFTVLQDVPVRDLKPAIVKVYDYYETDEFAIAEYNAPCSKDLGNA</sequence>
<keyword id="KW-0002">3D-structure</keyword>
<keyword id="KW-0082">Bait region</keyword>
<keyword id="KW-0903">Direct protein sequencing</keyword>
<keyword id="KW-1015">Disulfide bond</keyword>
<keyword id="KW-0325">Glycoprotein</keyword>
<keyword id="KW-1017">Isopeptide bond</keyword>
<keyword id="KW-0646">Protease inhibitor</keyword>
<keyword id="KW-1267">Proteomics identification</keyword>
<keyword id="KW-1185">Reference proteome</keyword>
<keyword id="KW-0964">Secreted</keyword>
<keyword id="KW-0722">Serine protease inhibitor</keyword>
<keyword id="KW-0732">Signal</keyword>
<keyword id="KW-0882">Thioester bond</keyword>
<organism>
    <name type="scientific">Homo sapiens</name>
    <name type="common">Human</name>
    <dbReference type="NCBI Taxonomy" id="9606"/>
    <lineage>
        <taxon>Eukaryota</taxon>
        <taxon>Metazoa</taxon>
        <taxon>Chordata</taxon>
        <taxon>Craniata</taxon>
        <taxon>Vertebrata</taxon>
        <taxon>Euteleostomi</taxon>
        <taxon>Mammalia</taxon>
        <taxon>Eutheria</taxon>
        <taxon>Euarchontoglires</taxon>
        <taxon>Primates</taxon>
        <taxon>Haplorrhini</taxon>
        <taxon>Catarrhini</taxon>
        <taxon>Hominidae</taxon>
        <taxon>Homo</taxon>
    </lineage>
</organism>
<dbReference type="EMBL" id="M11313">
    <property type="protein sequence ID" value="AAA51551.1"/>
    <property type="molecule type" value="mRNA"/>
</dbReference>
<dbReference type="EMBL" id="AY591530">
    <property type="protein sequence ID" value="AAT02228.1"/>
    <property type="status" value="ALT_INIT"/>
    <property type="molecule type" value="mRNA"/>
</dbReference>
<dbReference type="EMBL" id="AB209614">
    <property type="protein sequence ID" value="BAD92851.1"/>
    <property type="status" value="ALT_INIT"/>
    <property type="molecule type" value="mRNA"/>
</dbReference>
<dbReference type="EMBL" id="CR749334">
    <property type="protein sequence ID" value="CAH18188.1"/>
    <property type="molecule type" value="mRNA"/>
</dbReference>
<dbReference type="EMBL" id="AC007436">
    <property type="status" value="NOT_ANNOTATED_CDS"/>
    <property type="molecule type" value="Genomic_DNA"/>
</dbReference>
<dbReference type="EMBL" id="BC026246">
    <property type="protein sequence ID" value="AAH26246.1"/>
    <property type="molecule type" value="mRNA"/>
</dbReference>
<dbReference type="EMBL" id="BC040071">
    <property type="protein sequence ID" value="AAH40071.1"/>
    <property type="molecule type" value="mRNA"/>
</dbReference>
<dbReference type="EMBL" id="Z11711">
    <property type="protein sequence ID" value="CAA77774.1"/>
    <property type="molecule type" value="Genomic_DNA"/>
</dbReference>
<dbReference type="EMBL" id="X68728">
    <property type="protein sequence ID" value="CAA48670.1"/>
    <property type="molecule type" value="Genomic_DNA"/>
</dbReference>
<dbReference type="EMBL" id="X68729">
    <property type="protein sequence ID" value="CAA48670.1"/>
    <property type="status" value="JOINED"/>
    <property type="molecule type" value="Genomic_DNA"/>
</dbReference>
<dbReference type="EMBL" id="M36501">
    <property type="protein sequence ID" value="AAA51552.1"/>
    <property type="molecule type" value="mRNA"/>
</dbReference>
<dbReference type="EMBL" id="AF109189">
    <property type="protein sequence ID" value="AAQ13498.1"/>
    <property type="molecule type" value="mRNA"/>
</dbReference>
<dbReference type="CCDS" id="CCDS44827.1"/>
<dbReference type="PIR" id="A94033">
    <property type="entry name" value="MAHU"/>
</dbReference>
<dbReference type="RefSeq" id="NP_000005.3">
    <property type="nucleotide sequence ID" value="NM_000014.6"/>
</dbReference>
<dbReference type="RefSeq" id="NP_001334352.2">
    <property type="nucleotide sequence ID" value="NM_001347423.2"/>
</dbReference>
<dbReference type="RefSeq" id="NP_001334353.1">
    <property type="nucleotide sequence ID" value="NM_001347424.1"/>
</dbReference>
<dbReference type="RefSeq" id="NP_001334354.1">
    <property type="nucleotide sequence ID" value="NM_001347425.1"/>
</dbReference>
<dbReference type="PDB" id="1BV8">
    <property type="method" value="NMR"/>
    <property type="chains" value="A=1337-1474"/>
</dbReference>
<dbReference type="PDB" id="2P9R">
    <property type="method" value="X-ray"/>
    <property type="resolution" value="2.30 A"/>
    <property type="chains" value="A/B=126-227"/>
</dbReference>
<dbReference type="PDB" id="6TAV">
    <property type="method" value="X-ray"/>
    <property type="resolution" value="4.20 A"/>
    <property type="chains" value="A/B/C/D=1-1474"/>
</dbReference>
<dbReference type="PDB" id="7O7L">
    <property type="method" value="EM"/>
    <property type="resolution" value="4.50 A"/>
    <property type="chains" value="A/B/C/D=1-1474"/>
</dbReference>
<dbReference type="PDB" id="7O7M">
    <property type="method" value="EM"/>
    <property type="resolution" value="6.60 A"/>
    <property type="chains" value="A/B/C/D=1-1474"/>
</dbReference>
<dbReference type="PDB" id="7O7N">
    <property type="method" value="EM"/>
    <property type="resolution" value="7.30 A"/>
    <property type="chains" value="A/B/C/D=1-1474"/>
</dbReference>
<dbReference type="PDB" id="7O7O">
    <property type="method" value="EM"/>
    <property type="resolution" value="4.80 A"/>
    <property type="chains" value="A/B/C/D=1-1474"/>
</dbReference>
<dbReference type="PDB" id="7O7P">
    <property type="method" value="EM"/>
    <property type="resolution" value="4.60 A"/>
    <property type="chains" value="A/B/C/D=1-1474"/>
</dbReference>
<dbReference type="PDB" id="7O7Q">
    <property type="method" value="EM"/>
    <property type="resolution" value="3.60 A"/>
    <property type="chains" value="A/B/C/D=1-1474"/>
</dbReference>
<dbReference type="PDB" id="7O7R">
    <property type="method" value="EM"/>
    <property type="resolution" value="3.90 A"/>
    <property type="chains" value="A/B/C/D=1-1474"/>
</dbReference>
<dbReference type="PDB" id="7O7S">
    <property type="method" value="EM"/>
    <property type="resolution" value="4.30 A"/>
    <property type="chains" value="A/B/C/D=1-1474"/>
</dbReference>
<dbReference type="PDB" id="7VON">
    <property type="method" value="EM"/>
    <property type="resolution" value="5.20 A"/>
    <property type="chains" value="A=27-1468"/>
</dbReference>
<dbReference type="PDB" id="7VOO">
    <property type="method" value="EM"/>
    <property type="resolution" value="3.90 A"/>
    <property type="chains" value="A=27-1335"/>
</dbReference>
<dbReference type="PDBsum" id="1BV8"/>
<dbReference type="PDBsum" id="2P9R"/>
<dbReference type="PDBsum" id="6TAV"/>
<dbReference type="PDBsum" id="7O7L"/>
<dbReference type="PDBsum" id="7O7M"/>
<dbReference type="PDBsum" id="7O7N"/>
<dbReference type="PDBsum" id="7O7O"/>
<dbReference type="PDBsum" id="7O7P"/>
<dbReference type="PDBsum" id="7O7Q"/>
<dbReference type="PDBsum" id="7O7R"/>
<dbReference type="PDBsum" id="7O7S"/>
<dbReference type="PDBsum" id="7VON"/>
<dbReference type="PDBsum" id="7VOO"/>
<dbReference type="BMRB" id="P01023"/>
<dbReference type="EMDB" id="EMD-12747"/>
<dbReference type="EMDB" id="EMD-12748"/>
<dbReference type="EMDB" id="EMD-12750"/>
<dbReference type="EMDB" id="EMD-12751"/>
<dbReference type="EMDB" id="EMD-12752"/>
<dbReference type="EMDB" id="EMD-12753"/>
<dbReference type="EMDB" id="EMD-12754"/>
<dbReference type="EMDB" id="EMD-12755"/>
<dbReference type="EMDB" id="EMD-12941"/>
<dbReference type="EMDB" id="EMD-12942"/>
<dbReference type="EMDB" id="EMD-12943"/>
<dbReference type="EMDB" id="EMD-12944"/>
<dbReference type="EMDB" id="EMD-32051"/>
<dbReference type="EMDB" id="EMD-32052"/>
<dbReference type="PCDDB" id="P01023"/>
<dbReference type="SASBDB" id="P01023"/>
<dbReference type="SMR" id="P01023"/>
<dbReference type="BioGRID" id="106524">
    <property type="interactions" value="365"/>
</dbReference>
<dbReference type="CORUM" id="P01023"/>
<dbReference type="DIP" id="DIP-1118N"/>
<dbReference type="FunCoup" id="P01023">
    <property type="interactions" value="609"/>
</dbReference>
<dbReference type="IntAct" id="P01023">
    <property type="interactions" value="212"/>
</dbReference>
<dbReference type="MINT" id="P01023"/>
<dbReference type="STRING" id="9606.ENSP00000323929"/>
<dbReference type="BindingDB" id="P01023"/>
<dbReference type="ChEMBL" id="CHEMBL4295690"/>
<dbReference type="DrugBank" id="DB17449">
    <property type="generic name" value="Anacaulase"/>
</dbReference>
<dbReference type="DrugBank" id="DB00626">
    <property type="generic name" value="Bacitracin"/>
</dbReference>
<dbReference type="DrugBank" id="DB00102">
    <property type="generic name" value="Becaplermin"/>
</dbReference>
<dbReference type="DrugBank" id="DB00515">
    <property type="generic name" value="Cisplatin"/>
</dbReference>
<dbReference type="DrugBank" id="DB09130">
    <property type="generic name" value="Copper"/>
</dbReference>
<dbReference type="DrugBank" id="DB06796">
    <property type="generic name" value="Mangafodipir"/>
</dbReference>
<dbReference type="DrugBank" id="DB08888">
    <property type="generic name" value="Ocriplasmin"/>
</dbReference>
<dbReference type="DrugBank" id="DB12965">
    <property type="generic name" value="Silver"/>
</dbReference>
<dbReference type="DrugBank" id="DB01593">
    <property type="generic name" value="Zinc"/>
</dbReference>
<dbReference type="DrugBank" id="DB14487">
    <property type="generic name" value="Zinc acetate"/>
</dbReference>
<dbReference type="DrugBank" id="DB14533">
    <property type="generic name" value="Zinc chloride"/>
</dbReference>
<dbReference type="DrugBank" id="DB14548">
    <property type="generic name" value="Zinc sulfate, unspecified form"/>
</dbReference>
<dbReference type="MEROPS" id="I39.001"/>
<dbReference type="MoonDB" id="P01023">
    <property type="type" value="Predicted"/>
</dbReference>
<dbReference type="CarbonylDB" id="P01023"/>
<dbReference type="GlyConnect" id="730">
    <property type="glycosylation" value="47 N-Linked glycans (7 sites)"/>
</dbReference>
<dbReference type="GlyCosmos" id="P01023">
    <property type="glycosylation" value="14 sites, 62 glycans"/>
</dbReference>
<dbReference type="GlyGen" id="P01023">
    <property type="glycosylation" value="19 sites, 166 N-linked glycans (7 sites), 4 O-linked glycans (7 sites)"/>
</dbReference>
<dbReference type="iPTMnet" id="P01023"/>
<dbReference type="PhosphoSitePlus" id="P01023"/>
<dbReference type="SwissPalm" id="P01023"/>
<dbReference type="BioMuta" id="A2M"/>
<dbReference type="DMDM" id="308153640"/>
<dbReference type="CPTAC" id="non-CPTAC-1068"/>
<dbReference type="jPOST" id="P01023"/>
<dbReference type="MassIVE" id="P01023"/>
<dbReference type="PaxDb" id="9606-ENSP00000323929"/>
<dbReference type="PeptideAtlas" id="P01023"/>
<dbReference type="PRIDE" id="P01023"/>
<dbReference type="ProteomicsDB" id="51307"/>
<dbReference type="Pumba" id="P01023"/>
<dbReference type="Antibodypedia" id="859">
    <property type="antibodies" value="996 antibodies from 42 providers"/>
</dbReference>
<dbReference type="DNASU" id="2"/>
<dbReference type="Ensembl" id="ENST00000318602.12">
    <property type="protein sequence ID" value="ENSP00000323929.8"/>
    <property type="gene ID" value="ENSG00000175899.15"/>
</dbReference>
<dbReference type="GeneID" id="2"/>
<dbReference type="KEGG" id="hsa:2"/>
<dbReference type="MANE-Select" id="ENST00000318602.12">
    <property type="protein sequence ID" value="ENSP00000323929.8"/>
    <property type="RefSeq nucleotide sequence ID" value="NM_000014.6"/>
    <property type="RefSeq protein sequence ID" value="NP_000005.3"/>
</dbReference>
<dbReference type="UCSC" id="uc001qvk.2">
    <property type="organism name" value="human"/>
</dbReference>
<dbReference type="AGR" id="HGNC:7"/>
<dbReference type="CTD" id="2"/>
<dbReference type="DisGeNET" id="2"/>
<dbReference type="GeneCards" id="A2M"/>
<dbReference type="HGNC" id="HGNC:7">
    <property type="gene designation" value="A2M"/>
</dbReference>
<dbReference type="HPA" id="ENSG00000175899">
    <property type="expression patterns" value="Tissue enhanced (liver, lung)"/>
</dbReference>
<dbReference type="MalaCards" id="A2M"/>
<dbReference type="MIM" id="103950">
    <property type="type" value="gene"/>
</dbReference>
<dbReference type="neXtProt" id="NX_P01023"/>
<dbReference type="OpenTargets" id="ENSG00000175899"/>
<dbReference type="PharmGKB" id="PA24357"/>
<dbReference type="VEuPathDB" id="HostDB:ENSG00000175899"/>
<dbReference type="eggNOG" id="KOG1366">
    <property type="taxonomic scope" value="Eukaryota"/>
</dbReference>
<dbReference type="GeneTree" id="ENSGT00940000154904"/>
<dbReference type="HOGENOM" id="CLU_001634_0_1_1"/>
<dbReference type="InParanoid" id="P01023"/>
<dbReference type="OMA" id="HVNRTEV"/>
<dbReference type="OrthoDB" id="9998011at2759"/>
<dbReference type="PAN-GO" id="P01023">
    <property type="GO annotations" value="3 GO annotations based on evolutionary models"/>
</dbReference>
<dbReference type="PhylomeDB" id="P01023"/>
<dbReference type="TreeFam" id="TF313285"/>
<dbReference type="PathwayCommons" id="P01023"/>
<dbReference type="Reactome" id="R-HSA-114608">
    <property type="pathway name" value="Platelet degranulation"/>
</dbReference>
<dbReference type="Reactome" id="R-HSA-140837">
    <property type="pathway name" value="Intrinsic Pathway of Fibrin Clot Formation"/>
</dbReference>
<dbReference type="Reactome" id="R-HSA-1474228">
    <property type="pathway name" value="Degradation of the extracellular matrix"/>
</dbReference>
<dbReference type="Reactome" id="R-HSA-8963896">
    <property type="pathway name" value="HDL assembly"/>
</dbReference>
<dbReference type="SignaLink" id="P01023"/>
<dbReference type="SIGNOR" id="P01023"/>
<dbReference type="BioGRID-ORCS" id="2">
    <property type="hits" value="19 hits in 1151 CRISPR screens"/>
</dbReference>
<dbReference type="CD-CODE" id="B5B9A610">
    <property type="entry name" value="PML body"/>
</dbReference>
<dbReference type="ChiTaRS" id="A2M">
    <property type="organism name" value="human"/>
</dbReference>
<dbReference type="EvolutionaryTrace" id="P01023"/>
<dbReference type="GenomeRNAi" id="2"/>
<dbReference type="Pharos" id="P01023">
    <property type="development level" value="Tbio"/>
</dbReference>
<dbReference type="PRO" id="PR:P01023"/>
<dbReference type="Proteomes" id="UP000005640">
    <property type="component" value="Chromosome 12"/>
</dbReference>
<dbReference type="RNAct" id="P01023">
    <property type="molecule type" value="protein"/>
</dbReference>
<dbReference type="Bgee" id="ENSG00000175899">
    <property type="expression patterns" value="Expressed in lower lobe of lung and 203 other cell types or tissues"/>
</dbReference>
<dbReference type="ExpressionAtlas" id="P01023">
    <property type="expression patterns" value="baseline and differential"/>
</dbReference>
<dbReference type="GO" id="GO:0072562">
    <property type="term" value="C:blood microparticle"/>
    <property type="evidence" value="ECO:0007005"/>
    <property type="project" value="UniProtKB"/>
</dbReference>
<dbReference type="GO" id="GO:0062023">
    <property type="term" value="C:collagen-containing extracellular matrix"/>
    <property type="evidence" value="ECO:0007005"/>
    <property type="project" value="BHF-UCL"/>
</dbReference>
<dbReference type="GO" id="GO:0070062">
    <property type="term" value="C:extracellular exosome"/>
    <property type="evidence" value="ECO:0007005"/>
    <property type="project" value="UniProtKB"/>
</dbReference>
<dbReference type="GO" id="GO:0005576">
    <property type="term" value="C:extracellular region"/>
    <property type="evidence" value="ECO:0000304"/>
    <property type="project" value="Reactome"/>
</dbReference>
<dbReference type="GO" id="GO:0005615">
    <property type="term" value="C:extracellular space"/>
    <property type="evidence" value="ECO:0000318"/>
    <property type="project" value="GO_Central"/>
</dbReference>
<dbReference type="GO" id="GO:0031093">
    <property type="term" value="C:platelet alpha granule lumen"/>
    <property type="evidence" value="ECO:0000304"/>
    <property type="project" value="Reactome"/>
</dbReference>
<dbReference type="GO" id="GO:0048306">
    <property type="term" value="F:calcium-dependent protein binding"/>
    <property type="evidence" value="ECO:0000353"/>
    <property type="project" value="AgBase"/>
</dbReference>
<dbReference type="GO" id="GO:0004866">
    <property type="term" value="F:endopeptidase inhibitor activity"/>
    <property type="evidence" value="ECO:0000314"/>
    <property type="project" value="BHF-UCL"/>
</dbReference>
<dbReference type="GO" id="GO:0019899">
    <property type="term" value="F:enzyme binding"/>
    <property type="evidence" value="ECO:0000353"/>
    <property type="project" value="UniProtKB"/>
</dbReference>
<dbReference type="GO" id="GO:0019838">
    <property type="term" value="F:growth factor binding"/>
    <property type="evidence" value="ECO:0000314"/>
    <property type="project" value="UniProtKB"/>
</dbReference>
<dbReference type="GO" id="GO:0019966">
    <property type="term" value="F:interleukin-1 binding"/>
    <property type="evidence" value="ECO:0000314"/>
    <property type="project" value="UniProtKB"/>
</dbReference>
<dbReference type="GO" id="GO:0019959">
    <property type="term" value="F:interleukin-8 binding"/>
    <property type="evidence" value="ECO:0000353"/>
    <property type="project" value="UniProtKB"/>
</dbReference>
<dbReference type="GO" id="GO:0002020">
    <property type="term" value="F:protease binding"/>
    <property type="evidence" value="ECO:0000353"/>
    <property type="project" value="BHF-UCL"/>
</dbReference>
<dbReference type="GO" id="GO:0004867">
    <property type="term" value="F:serine-type endopeptidase inhibitor activity"/>
    <property type="evidence" value="ECO:0000314"/>
    <property type="project" value="UniProtKB"/>
</dbReference>
<dbReference type="GO" id="GO:0005102">
    <property type="term" value="F:signaling receptor binding"/>
    <property type="evidence" value="ECO:0000315"/>
    <property type="project" value="AgBase"/>
</dbReference>
<dbReference type="GO" id="GO:0043120">
    <property type="term" value="F:tumor necrosis factor binding"/>
    <property type="evidence" value="ECO:0000314"/>
    <property type="project" value="UniProtKB"/>
</dbReference>
<dbReference type="GO" id="GO:0001869">
    <property type="term" value="P:negative regulation of complement activation, lectin pathway"/>
    <property type="evidence" value="ECO:0000314"/>
    <property type="project" value="UniProtKB"/>
</dbReference>
<dbReference type="GO" id="GO:0048863">
    <property type="term" value="P:stem cell differentiation"/>
    <property type="evidence" value="ECO:0007669"/>
    <property type="project" value="Ensembl"/>
</dbReference>
<dbReference type="CDD" id="cd02897">
    <property type="entry name" value="A2M_2"/>
    <property type="match status" value="1"/>
</dbReference>
<dbReference type="DisProt" id="DP02649"/>
<dbReference type="FunFam" id="2.20.130.20:FF:000006">
    <property type="entry name" value="Alpha-2-macroglobulin"/>
    <property type="match status" value="1"/>
</dbReference>
<dbReference type="FunFam" id="2.60.40.1940:FF:000002">
    <property type="entry name" value="Alpha-2-macroglobulin"/>
    <property type="match status" value="1"/>
</dbReference>
<dbReference type="FunFam" id="2.60.40.10:FF:000312">
    <property type="entry name" value="Alpha-2-macroglobulin like 1"/>
    <property type="match status" value="1"/>
</dbReference>
<dbReference type="FunFam" id="1.50.10.20:FF:000001">
    <property type="entry name" value="CD109 isoform 1"/>
    <property type="match status" value="1"/>
</dbReference>
<dbReference type="FunFam" id="2.60.40.1930:FF:000001">
    <property type="entry name" value="CD109 isoform 3"/>
    <property type="match status" value="1"/>
</dbReference>
<dbReference type="FunFam" id="2.60.40.10:FF:000952">
    <property type="entry name" value="PZP, alpha-2-macroglobulin like"/>
    <property type="match status" value="1"/>
</dbReference>
<dbReference type="FunFam" id="2.60.40.1930:FF:000002">
    <property type="entry name" value="PZP, alpha-2-macroglobulin like"/>
    <property type="match status" value="1"/>
</dbReference>
<dbReference type="FunFam" id="2.60.40.690:FF:000001">
    <property type="entry name" value="PZP, alpha-2-macroglobulin like"/>
    <property type="match status" value="1"/>
</dbReference>
<dbReference type="Gene3D" id="1.50.10.20">
    <property type="match status" value="1"/>
</dbReference>
<dbReference type="Gene3D" id="2.20.130.20">
    <property type="match status" value="2"/>
</dbReference>
<dbReference type="Gene3D" id="2.60.120.1540">
    <property type="match status" value="1"/>
</dbReference>
<dbReference type="Gene3D" id="2.60.40.1930">
    <property type="match status" value="2"/>
</dbReference>
<dbReference type="Gene3D" id="2.60.40.1940">
    <property type="match status" value="1"/>
</dbReference>
<dbReference type="Gene3D" id="2.60.40.690">
    <property type="entry name" value="Alpha-macroglobulin, receptor-binding domain"/>
    <property type="match status" value="1"/>
</dbReference>
<dbReference type="Gene3D" id="2.60.40.10">
    <property type="entry name" value="Immunoglobulins"/>
    <property type="match status" value="2"/>
</dbReference>
<dbReference type="InterPro" id="IPR009048">
    <property type="entry name" value="A-macroglobulin_rcpt-bd"/>
</dbReference>
<dbReference type="InterPro" id="IPR036595">
    <property type="entry name" value="A-macroglobulin_rcpt-bd_sf"/>
</dbReference>
<dbReference type="InterPro" id="IPR050473">
    <property type="entry name" value="A2M/Complement_sys"/>
</dbReference>
<dbReference type="InterPro" id="IPR011625">
    <property type="entry name" value="A2M_N_BRD"/>
</dbReference>
<dbReference type="InterPro" id="IPR041813">
    <property type="entry name" value="A2M_TED"/>
</dbReference>
<dbReference type="InterPro" id="IPR047565">
    <property type="entry name" value="Alpha-macroglob_thiol-ester_cl"/>
</dbReference>
<dbReference type="InterPro" id="IPR011626">
    <property type="entry name" value="Alpha-macroglobulin_TED"/>
</dbReference>
<dbReference type="InterPro" id="IPR013783">
    <property type="entry name" value="Ig-like_fold"/>
</dbReference>
<dbReference type="InterPro" id="IPR014756">
    <property type="entry name" value="Ig_E-set"/>
</dbReference>
<dbReference type="InterPro" id="IPR001599">
    <property type="entry name" value="Macroglobln_a2"/>
</dbReference>
<dbReference type="InterPro" id="IPR019742">
    <property type="entry name" value="MacrogloblnA2_CS"/>
</dbReference>
<dbReference type="InterPro" id="IPR002890">
    <property type="entry name" value="MG2"/>
</dbReference>
<dbReference type="InterPro" id="IPR041555">
    <property type="entry name" value="MG3"/>
</dbReference>
<dbReference type="InterPro" id="IPR040839">
    <property type="entry name" value="MG4"/>
</dbReference>
<dbReference type="InterPro" id="IPR008930">
    <property type="entry name" value="Terpenoid_cyclase/PrenylTrfase"/>
</dbReference>
<dbReference type="InterPro" id="IPR010916">
    <property type="entry name" value="TonB_box_CS"/>
</dbReference>
<dbReference type="PANTHER" id="PTHR11412:SF165">
    <property type="entry name" value="ALPHA-2-MACROGLOBULIN"/>
    <property type="match status" value="1"/>
</dbReference>
<dbReference type="PANTHER" id="PTHR11412">
    <property type="entry name" value="MACROGLOBULIN / COMPLEMENT"/>
    <property type="match status" value="1"/>
</dbReference>
<dbReference type="Pfam" id="PF00207">
    <property type="entry name" value="A2M"/>
    <property type="match status" value="1"/>
</dbReference>
<dbReference type="Pfam" id="PF07703">
    <property type="entry name" value="A2M_BRD"/>
    <property type="match status" value="1"/>
</dbReference>
<dbReference type="Pfam" id="PF07677">
    <property type="entry name" value="A2M_recep"/>
    <property type="match status" value="1"/>
</dbReference>
<dbReference type="Pfam" id="PF01835">
    <property type="entry name" value="MG2"/>
    <property type="match status" value="1"/>
</dbReference>
<dbReference type="Pfam" id="PF17791">
    <property type="entry name" value="MG3"/>
    <property type="match status" value="1"/>
</dbReference>
<dbReference type="Pfam" id="PF17789">
    <property type="entry name" value="MG4"/>
    <property type="match status" value="1"/>
</dbReference>
<dbReference type="Pfam" id="PF07678">
    <property type="entry name" value="TED_complement"/>
    <property type="match status" value="1"/>
</dbReference>
<dbReference type="SMART" id="SM01360">
    <property type="entry name" value="A2M"/>
    <property type="match status" value="1"/>
</dbReference>
<dbReference type="SMART" id="SM01359">
    <property type="entry name" value="A2M_N_2"/>
    <property type="match status" value="1"/>
</dbReference>
<dbReference type="SMART" id="SM01361">
    <property type="entry name" value="A2M_recep"/>
    <property type="match status" value="1"/>
</dbReference>
<dbReference type="SMART" id="SM01419">
    <property type="entry name" value="Thiol-ester_cl"/>
    <property type="match status" value="1"/>
</dbReference>
<dbReference type="SUPFAM" id="SSF49410">
    <property type="entry name" value="Alpha-macroglobulin receptor domain"/>
    <property type="match status" value="1"/>
</dbReference>
<dbReference type="SUPFAM" id="SSF81296">
    <property type="entry name" value="E set domains"/>
    <property type="match status" value="1"/>
</dbReference>
<dbReference type="SUPFAM" id="SSF48239">
    <property type="entry name" value="Terpenoid cyclases/Protein prenyltransferases"/>
    <property type="match status" value="1"/>
</dbReference>
<dbReference type="PROSITE" id="PS00477">
    <property type="entry name" value="ALPHA_2_MACROGLOBULIN"/>
    <property type="match status" value="1"/>
</dbReference>
<comment type="function">
    <text>Is able to inhibit all four classes of proteinases by a unique 'trapping' mechanism. This protein has a peptide stretch, called the 'bait region' which contains specific cleavage sites for different proteinases. When a proteinase cleaves the bait region, a conformational change is induced in the protein which traps the proteinase. The entrapped enzyme remains active against low molecular weight substrates (activity against high molecular weight substrates is greatly reduced). Following cleavage in the bait region, a thioester bond is hydrolyzed and mediates the covalent binding of the protein to the proteinase.</text>
</comment>
<comment type="subunit">
    <text evidence="12 14">Homotetramer; disulfide-linked.</text>
</comment>
<comment type="interaction">
    <interactant intactId="EBI-640741">
        <id>P01023</id>
    </interactant>
    <interactant intactId="EBI-22011868">
        <id>Q6PCB6</id>
        <label>ABHD17C</label>
    </interactant>
    <organismsDiffer>false</organismsDiffer>
    <experiments>3</experiments>
</comment>
<comment type="interaction">
    <interactant intactId="EBI-640741">
        <id>P01023</id>
    </interactant>
    <interactant intactId="EBI-11529439">
        <id>P63010-2</id>
        <label>AP2B1</label>
    </interactant>
    <organismsDiffer>false</organismsDiffer>
    <experiments>3</experiments>
</comment>
<comment type="interaction">
    <interactant intactId="EBI-640741">
        <id>P01023</id>
    </interactant>
    <interactant intactId="EBI-718459">
        <id>Q9UII2</id>
        <label>ATP5IF1</label>
    </interactant>
    <organismsDiffer>false</organismsDiffer>
    <experiments>3</experiments>
</comment>
<comment type="interaction">
    <interactant intactId="EBI-640741">
        <id>P01023</id>
    </interactant>
    <interactant intactId="EBI-2837444">
        <id>Q8WUW1</id>
        <label>BRK1</label>
    </interactant>
    <organismsDiffer>false</organismsDiffer>
    <experiments>3</experiments>
</comment>
<comment type="interaction">
    <interactant intactId="EBI-640741">
        <id>P01023</id>
    </interactant>
    <interactant intactId="EBI-13350535">
        <id>Q92478</id>
        <label>CLEC2B</label>
    </interactant>
    <organismsDiffer>false</organismsDiffer>
    <experiments>3</experiments>
</comment>
<comment type="interaction">
    <interactant intactId="EBI-640741">
        <id>P01023</id>
    </interactant>
    <interactant intactId="EBI-350590">
        <id>Q9UNS2</id>
        <label>COPS3</label>
    </interactant>
    <organismsDiffer>false</organismsDiffer>
    <experiments>3</experiments>
</comment>
<comment type="interaction">
    <interactant intactId="EBI-640741">
        <id>P01023</id>
    </interactant>
    <interactant intactId="EBI-1809826">
        <id>P04141</id>
        <label>CSF2</label>
    </interactant>
    <organismsDiffer>false</organismsDiffer>
    <experiments>3</experiments>
</comment>
<comment type="interaction">
    <interactant intactId="EBI-640741">
        <id>P01023</id>
    </interactant>
    <interactant intactId="EBI-491549">
        <id>P35222</id>
        <label>CTNNB1</label>
    </interactant>
    <organismsDiffer>false</organismsDiffer>
    <experiments>3</experiments>
</comment>
<comment type="interaction">
    <interactant intactId="EBI-640741">
        <id>P01023</id>
    </interactant>
    <interactant intactId="EBI-1048143">
        <id>Q7L576</id>
        <label>CYFIP1</label>
    </interactant>
    <organismsDiffer>false</organismsDiffer>
    <experiments>3</experiments>
</comment>
<comment type="interaction">
    <interactant intactId="EBI-640741">
        <id>P01023</id>
    </interactant>
    <interactant intactId="EBI-25830216">
        <id>Q9NR90-2</id>
        <label>DAZ3</label>
    </interactant>
    <organismsDiffer>false</organismsDiffer>
    <experiments>3</experiments>
</comment>
<comment type="interaction">
    <interactant intactId="EBI-640741">
        <id>P01023</id>
    </interactant>
    <interactant intactId="EBI-347658">
        <id>Q9UHI6</id>
        <label>DDX20</label>
    </interactant>
    <organismsDiffer>false</organismsDiffer>
    <experiments>3</experiments>
</comment>
<comment type="interaction">
    <interactant intactId="EBI-640741">
        <id>P01023</id>
    </interactant>
    <interactant intactId="EBI-2795449">
        <id>Q9H147</id>
        <label>DNTTIP1</label>
    </interactant>
    <organismsDiffer>false</organismsDiffer>
    <experiments>3</experiments>
</comment>
<comment type="interaction">
    <interactant intactId="EBI-640741">
        <id>P01023</id>
    </interactant>
    <interactant intactId="EBI-6393536">
        <id>O75616</id>
        <label>ERAL1</label>
    </interactant>
    <organismsDiffer>false</organismsDiffer>
    <experiments>3</experiments>
</comment>
<comment type="interaction">
    <interactant intactId="EBI-640741">
        <id>P01023</id>
    </interactant>
    <interactant intactId="EBI-25830360">
        <id>Q9Y261-2</id>
        <label>FOXA2</label>
    </interactant>
    <organismsDiffer>false</organismsDiffer>
    <experiments>3</experiments>
</comment>
<comment type="interaction">
    <interactant intactId="EBI-640741">
        <id>P01023</id>
    </interactant>
    <interactant intactId="EBI-10253815">
        <id>Q6PIV2</id>
        <label>FOXR1</label>
    </interactant>
    <organismsDiffer>false</organismsDiffer>
    <experiments>3</experiments>
</comment>
<comment type="interaction">
    <interactant intactId="EBI-640741">
        <id>P01023</id>
    </interactant>
    <interactant intactId="EBI-2466380">
        <id>Q9ULV1</id>
        <label>FZD4</label>
    </interactant>
    <organismsDiffer>false</organismsDiffer>
    <experiments>3</experiments>
</comment>
<comment type="interaction">
    <interactant intactId="EBI-640741">
        <id>P01023</id>
    </interactant>
    <interactant intactId="EBI-1199859">
        <id>P0C0S5</id>
        <label>H2AZ1</label>
    </interactant>
    <organismsDiffer>false</organismsDiffer>
    <experiments>3</experiments>
</comment>
<comment type="interaction">
    <interactant intactId="EBI-640741">
        <id>P01023</id>
    </interactant>
    <interactant intactId="EBI-79722">
        <id>P68431</id>
        <label>H3C12</label>
    </interactant>
    <organismsDiffer>false</organismsDiffer>
    <experiments>3</experiments>
</comment>
<comment type="interaction">
    <interactant intactId="EBI-640741">
        <id>P01023</id>
    </interactant>
    <interactant intactId="EBI-3923226">
        <id>P09017</id>
        <label>HOXC4</label>
    </interactant>
    <organismsDiffer>false</organismsDiffer>
    <experiments>3</experiments>
</comment>
<comment type="interaction">
    <interactant intactId="EBI-640741">
        <id>P01023</id>
    </interactant>
    <interactant intactId="EBI-21911304">
        <id>Q6DN90-2</id>
        <label>IQSEC1</label>
    </interactant>
    <organismsDiffer>false</organismsDiffer>
    <experiments>3</experiments>
</comment>
<comment type="interaction">
    <interactant intactId="EBI-640741">
        <id>P01023</id>
    </interactant>
    <interactant intactId="EBI-399080">
        <id>Q92993</id>
        <label>KAT5</label>
    </interactant>
    <organismsDiffer>false</organismsDiffer>
    <experiments>3</experiments>
</comment>
<comment type="interaction">
    <interactant intactId="EBI-640741">
        <id>P01023</id>
    </interactant>
    <interactant intactId="EBI-20795332">
        <id>Q92993-2</id>
        <label>KAT5</label>
    </interactant>
    <organismsDiffer>false</organismsDiffer>
    <experiments>3</experiments>
</comment>
<comment type="interaction">
    <interactant intactId="EBI-640741">
        <id>P01023</id>
    </interactant>
    <interactant intactId="EBI-10172290">
        <id>P60409</id>
        <label>KRTAP10-7</label>
    </interactant>
    <organismsDiffer>false</organismsDiffer>
    <experiments>3</experiments>
</comment>
<comment type="interaction">
    <interactant intactId="EBI-640741">
        <id>P01023</id>
    </interactant>
    <interactant intactId="EBI-10261141">
        <id>Q8IUC2</id>
        <label>KRTAP8-1</label>
    </interactant>
    <organismsDiffer>false</organismsDiffer>
    <experiments>3</experiments>
</comment>
<comment type="interaction">
    <interactant intactId="EBI-640741">
        <id>P01023</id>
    </interactant>
    <interactant intactId="EBI-10258746">
        <id>Q9UPM6</id>
        <label>LHX6</label>
    </interactant>
    <organismsDiffer>false</organismsDiffer>
    <experiments>3</experiments>
</comment>
<comment type="interaction">
    <interactant intactId="EBI-640741">
        <id>P01023</id>
    </interactant>
    <interactant intactId="EBI-739832">
        <id>Q8TBB1</id>
        <label>LNX1</label>
    </interactant>
    <organismsDiffer>false</organismsDiffer>
    <experiments>3</experiments>
</comment>
<comment type="interaction">
    <interactant intactId="EBI-640741">
        <id>P01023</id>
    </interactant>
    <interactant intactId="EBI-79452">
        <id>P07948</id>
        <label>LYN</label>
    </interactant>
    <organismsDiffer>false</organismsDiffer>
    <experiments>3</experiments>
</comment>
<comment type="interaction">
    <interactant intactId="EBI-640741">
        <id>P01023</id>
    </interactant>
    <interactant intactId="EBI-4397720">
        <id>Q8TDB4</id>
        <label>MGARP</label>
    </interactant>
    <organismsDiffer>false</organismsDiffer>
    <experiments>3</experiments>
</comment>
<comment type="interaction">
    <interactant intactId="EBI-640741">
        <id>P01023</id>
    </interactant>
    <interactant intactId="EBI-21250407">
        <id>A4FUJ8</id>
        <label>MKL1</label>
    </interactant>
    <organismsDiffer>false</organismsDiffer>
    <experiments>3</experiments>
</comment>
<comment type="interaction">
    <interactant intactId="EBI-640741">
        <id>P01023</id>
    </interactant>
    <interactant intactId="EBI-2829677">
        <id>P41218</id>
        <label>MNDA</label>
    </interactant>
    <organismsDiffer>false</organismsDiffer>
    <experiments>3</experiments>
</comment>
<comment type="interaction">
    <interactant intactId="EBI-640741">
        <id>P01023</id>
    </interactant>
    <interactant intactId="EBI-995714">
        <id>Q9Y605</id>
        <label>MRFAP1</label>
    </interactant>
    <organismsDiffer>false</organismsDiffer>
    <experiments>3</experiments>
</comment>
<comment type="interaction">
    <interactant intactId="EBI-640741">
        <id>P01023</id>
    </interactant>
    <interactant intactId="EBI-1058491">
        <id>Q96FW1</id>
        <label>OTUB1</label>
    </interactant>
    <organismsDiffer>false</organismsDiffer>
    <experiments>3</experiments>
</comment>
<comment type="interaction">
    <interactant intactId="EBI-640741">
        <id>P01023</id>
    </interactant>
    <interactant intactId="EBI-25830200">
        <id>Q6GQQ9-2</id>
        <label>OTUD7B</label>
    </interactant>
    <organismsDiffer>false</organismsDiffer>
    <experiments>3</experiments>
</comment>
<comment type="interaction">
    <interactant intactId="EBI-640741">
        <id>P01023</id>
    </interactant>
    <interactant intactId="EBI-1164361">
        <id>Q99497</id>
        <label>PARK7</label>
    </interactant>
    <organismsDiffer>false</organismsDiffer>
    <experiments>3</experiments>
</comment>
<comment type="interaction">
    <interactant intactId="EBI-640741">
        <id>P01023</id>
    </interactant>
    <interactant intactId="EBI-629434">
        <id>O75925</id>
        <label>PIAS1</label>
    </interactant>
    <organismsDiffer>false</organismsDiffer>
    <experiments>3</experiments>
</comment>
<comment type="interaction">
    <interactant intactId="EBI-640741">
        <id>P01023</id>
    </interactant>
    <interactant intactId="EBI-9090282">
        <id>P27986-2</id>
        <label>PIK3R1</label>
    </interactant>
    <organismsDiffer>false</organismsDiffer>
    <experiments>3</experiments>
</comment>
<comment type="interaction">
    <interactant intactId="EBI-640741">
        <id>P01023</id>
    </interactant>
    <interactant intactId="EBI-25829882">
        <id>O75626-3</id>
        <label>PRDM1</label>
    </interactant>
    <organismsDiffer>false</organismsDiffer>
    <experiments>3</experiments>
</comment>
<comment type="interaction">
    <interactant intactId="EBI-640741">
        <id>P01023</id>
    </interactant>
    <interactant intactId="EBI-6552718">
        <id>P57729</id>
        <label>RAB38</label>
    </interactant>
    <organismsDiffer>false</organismsDiffer>
    <experiments>3</experiments>
</comment>
<comment type="interaction">
    <interactant intactId="EBI-640741">
        <id>P01023</id>
    </interactant>
    <interactant intactId="EBI-25829984">
        <id>Q9ULX5</id>
        <label>RNF112</label>
    </interactant>
    <organismsDiffer>false</organismsDiffer>
    <experiments>3</experiments>
</comment>
<comment type="interaction">
    <interactant intactId="EBI-640741">
        <id>P01023</id>
    </interactant>
    <interactant intactId="EBI-743938">
        <id>Q96D59</id>
        <label>RNF183</label>
    </interactant>
    <organismsDiffer>false</organismsDiffer>
    <experiments>3</experiments>
</comment>
<comment type="interaction">
    <interactant intactId="EBI-640741">
        <id>P01023</id>
    </interactant>
    <interactant intactId="EBI-458391">
        <id>P04271</id>
        <label>S100B</label>
    </interactant>
    <organismsDiffer>false</organismsDiffer>
    <experiments>3</experiments>
</comment>
<comment type="interaction">
    <interactant intactId="EBI-640741">
        <id>P01023</id>
    </interactant>
    <interactant intactId="EBI-395447">
        <id>Q16637-3</id>
        <label>SMN2</label>
    </interactant>
    <organismsDiffer>false</organismsDiffer>
    <experiments>3</experiments>
</comment>
<comment type="interaction">
    <interactant intactId="EBI-640741">
        <id>P01023</id>
    </interactant>
    <interactant intactId="EBI-10696971">
        <id>Q7Z6I5</id>
        <label>SPATA12</label>
    </interactant>
    <organismsDiffer>false</organismsDiffer>
    <experiments>3</experiments>
</comment>
<comment type="interaction">
    <interactant intactId="EBI-640741">
        <id>P01023</id>
    </interactant>
    <interactant intactId="EBI-357085">
        <id>Q9UNE7</id>
        <label>STUB1</label>
    </interactant>
    <organismsDiffer>false</organismsDiffer>
    <experiments>3</experiments>
</comment>
<comment type="interaction">
    <interactant intactId="EBI-640741">
        <id>P01023</id>
    </interactant>
    <interactant intactId="EBI-714135">
        <id>O75558</id>
        <label>STX11</label>
    </interactant>
    <organismsDiffer>false</organismsDiffer>
    <experiments>3</experiments>
</comment>
<comment type="interaction">
    <interactant intactId="EBI-640741">
        <id>P01023</id>
    </interactant>
    <interactant intactId="EBI-8484990">
        <id>Q8N4C7</id>
        <label>STX19</label>
    </interactant>
    <organismsDiffer>false</organismsDiffer>
    <experiments>3</experiments>
</comment>
<comment type="interaction">
    <interactant intactId="EBI-640741">
        <id>P01023</id>
    </interactant>
    <interactant intactId="EBI-25892332">
        <id>P43405-2</id>
        <label>SYK</label>
    </interactant>
    <organismsDiffer>false</organismsDiffer>
    <experiments>3</experiments>
</comment>
<comment type="interaction">
    <interactant intactId="EBI-640741">
        <id>P01023</id>
    </interactant>
    <interactant intactId="EBI-12151837">
        <id>P28347-2</id>
        <label>TEAD1</label>
    </interactant>
    <organismsDiffer>false</organismsDiffer>
    <experiments>3</experiments>
</comment>
<comment type="interaction">
    <interactant intactId="EBI-640741">
        <id>P01023</id>
    </interactant>
    <interactant intactId="EBI-11525489">
        <id>Q86WT6-2</id>
        <label>TRIM69</label>
    </interactant>
    <organismsDiffer>false</organismsDiffer>
    <experiments>3</experiments>
</comment>
<comment type="interaction">
    <interactant intactId="EBI-640741">
        <id>P01023</id>
    </interactant>
    <interactant intactId="EBI-1797313">
        <id>Q8WVJ9</id>
        <label>TWIST2</label>
    </interactant>
    <organismsDiffer>false</organismsDiffer>
    <experiments>3</experiments>
</comment>
<comment type="interaction">
    <interactant intactId="EBI-640741">
        <id>P01023</id>
    </interactant>
    <interactant intactId="EBI-594644">
        <id>P10599</id>
        <label>TXN</label>
    </interactant>
    <organismsDiffer>false</organismsDiffer>
    <experiments>3</experiments>
</comment>
<comment type="interaction">
    <interactant intactId="EBI-640741">
        <id>P01023</id>
    </interactant>
    <interactant intactId="EBI-473284">
        <id>Q9BVJ6</id>
        <label>UTP14A</label>
    </interactant>
    <organismsDiffer>false</organismsDiffer>
    <experiments>3</experiments>
</comment>
<comment type="interaction">
    <interactant intactId="EBI-640741">
        <id>P01023</id>
    </interactant>
    <interactant intactId="EBI-11141397">
        <id>Q9UBQ0-2</id>
        <label>VPS29</label>
    </interactant>
    <organismsDiffer>false</organismsDiffer>
    <experiments>3</experiments>
</comment>
<comment type="interaction">
    <interactant intactId="EBI-640741">
        <id>P01023</id>
    </interactant>
    <interactant intactId="EBI-2527283">
        <id>Q96AX1</id>
        <label>VPS33A</label>
    </interactant>
    <organismsDiffer>false</organismsDiffer>
    <experiments>3</experiments>
</comment>
<comment type="interaction">
    <interactant intactId="EBI-640741">
        <id>P01023</id>
    </interactant>
    <interactant intactId="EBI-2813661">
        <id>Q8N895</id>
        <label>ZNF366</label>
    </interactant>
    <organismsDiffer>false</organismsDiffer>
    <experiments>3</experiments>
</comment>
<comment type="interaction">
    <interactant intactId="EBI-640741">
        <id>P01023</id>
    </interactant>
    <interactant intactId="EBI-6455001">
        <id>Q99KR7</id>
        <label>Ppif</label>
    </interactant>
    <organismsDiffer>true</organismsDiffer>
    <experiments>3</experiments>
</comment>
<comment type="subcellular location">
    <subcellularLocation>
        <location evidence="14">Secreted</location>
    </subcellularLocation>
</comment>
<comment type="tissue specificity">
    <text evidence="14">Secreted in plasma.</text>
</comment>
<comment type="developmental stage">
    <text>Unlike the rat protein, which is an acute phase protein, this protein is always in circulation at high levels.</text>
</comment>
<comment type="similarity">
    <text evidence="16">Belongs to the protease inhibitor I39 (alpha-2-macroglobulin) family.</text>
</comment>
<comment type="sequence caution" evidence="16">
    <conflict type="erroneous initiation">
        <sequence resource="EMBL-CDS" id="AAT02228"/>
    </conflict>
    <text>Extended N-terminus.</text>
</comment>
<comment type="sequence caution" evidence="16">
    <conflict type="erroneous initiation">
        <sequence resource="EMBL-CDS" id="BAD92851"/>
    </conflict>
    <text>Extended N-terminus.</text>
</comment>
<comment type="online information" name="Wikipedia">
    <link uri="https://en.wikipedia.org/wiki/Alpha_2-macroglobulin"/>
    <text>Alpha-2 macroglobulin entry</text>
</comment>
<feature type="signal peptide" evidence="14">
    <location>
        <begin position="1"/>
        <end position="23"/>
    </location>
</feature>
<feature type="chain" id="PRO_0000000055" description="Alpha-2-macroglobulin" evidence="14">
    <location>
        <begin position="24"/>
        <end position="1474"/>
    </location>
</feature>
<feature type="region of interest" description="Bait region">
    <location>
        <begin position="690"/>
        <end position="728"/>
    </location>
</feature>
<feature type="region of interest" description="Inhibitory">
    <location>
        <begin position="704"/>
        <end position="709"/>
    </location>
</feature>
<feature type="region of interest" description="Inhibitory">
    <location>
        <begin position="719"/>
        <end position="723"/>
    </location>
</feature>
<feature type="region of interest" description="Inhibitory">
    <location>
        <begin position="730"/>
        <end position="735"/>
    </location>
</feature>
<feature type="glycosylation site" description="N-linked (GlcNAc...) (complex) asparagine" evidence="7 10">
    <location>
        <position position="55"/>
    </location>
</feature>
<feature type="glycosylation site" description="N-linked (GlcNAc...) asparagine" evidence="14">
    <location>
        <position position="70"/>
    </location>
</feature>
<feature type="glycosylation site" description="N-linked (GlcNAc...) asparagine" evidence="7 14">
    <location>
        <position position="247"/>
    </location>
</feature>
<feature type="glycosylation site" description="N-linked (GlcNAc...) asparagine" evidence="7 11 14">
    <location>
        <position position="396"/>
    </location>
</feature>
<feature type="glycosylation site" description="N-linked (GlcNAc...) asparagine" evidence="7 14">
    <location>
        <position position="410"/>
    </location>
</feature>
<feature type="glycosylation site" description="N-linked (GlcNAc...) asparagine" evidence="4 7">
    <location>
        <position position="869"/>
    </location>
</feature>
<feature type="glycosylation site" description="N-linked (GlcNAc...) asparagine" evidence="2 7 11 14">
    <location>
        <position position="991"/>
    </location>
</feature>
<feature type="glycosylation site" description="N-linked (GlcNAc...) (complex) asparagine" evidence="4 7 10 11">
    <location>
        <position position="1424"/>
    </location>
</feature>
<feature type="disulfide bond" evidence="14">
    <location>
        <begin position="48"/>
        <end position="86"/>
    </location>
</feature>
<feature type="disulfide bond" evidence="14">
    <location>
        <begin position="251"/>
        <end position="299"/>
    </location>
</feature>
<feature type="disulfide bond" evidence="14">
    <location>
        <begin position="269"/>
        <end position="287"/>
    </location>
</feature>
<feature type="disulfide bond" description="Interchain (with C-431)" evidence="12">
    <location>
        <position position="278"/>
    </location>
</feature>
<feature type="disulfide bond" description="Interchain (with C-278)" evidence="12">
    <location>
        <position position="431"/>
    </location>
</feature>
<feature type="disulfide bond" evidence="12">
    <location>
        <begin position="470"/>
        <end position="563"/>
    </location>
</feature>
<feature type="disulfide bond" evidence="12 14">
    <location>
        <begin position="595"/>
        <end position="771"/>
    </location>
</feature>
<feature type="disulfide bond" evidence="14">
    <location>
        <begin position="642"/>
        <end position="689"/>
    </location>
</feature>
<feature type="disulfide bond" evidence="14">
    <location>
        <begin position="821"/>
        <end position="849"/>
    </location>
</feature>
<feature type="disulfide bond" evidence="14">
    <location>
        <begin position="847"/>
        <end position="883"/>
    </location>
</feature>
<feature type="disulfide bond" evidence="14">
    <location>
        <begin position="921"/>
        <end position="1321"/>
    </location>
</feature>
<feature type="disulfide bond" evidence="14">
    <location>
        <begin position="1079"/>
        <end position="1127"/>
    </location>
</feature>
<feature type="disulfide bond" evidence="14">
    <location>
        <begin position="1352"/>
        <end position="1467"/>
    </location>
</feature>
<feature type="cross-link" description="Isoglutamyl lysine isopeptide (Gln-Lys) (interchain with K-? in other proteins)" evidence="1">
    <location>
        <position position="693"/>
    </location>
</feature>
<feature type="cross-link" description="Isoglutamyl lysine isopeptide (Gln-Lys) (interchain with K-? in other proteins)" evidence="1">
    <location>
        <position position="694"/>
    </location>
</feature>
<feature type="cross-link" description="Isoglutamyl cysteine thioester (Cys-Gln)" evidence="14">
    <location>
        <begin position="972"/>
        <end position="975"/>
    </location>
</feature>
<feature type="sequence variant" id="VAR_026820" description="In dbSNP:rs226405." evidence="5 6 9 13 15">
    <original>N</original>
    <variation>D</variation>
    <location>
        <position position="639"/>
    </location>
</feature>
<feature type="sequence variant" id="VAR_000012" description="In dbSNP:rs1800434.">
    <original>R</original>
    <variation>H</variation>
    <location>
        <position position="704"/>
    </location>
</feature>
<feature type="sequence variant" id="VAR_026821" description="In dbSNP:rs3180392.">
    <original>L</original>
    <variation>Q</variation>
    <location>
        <position position="815"/>
    </location>
</feature>
<feature type="sequence variant" id="VAR_000013" description="Probably interferes with the activity; dbSNP:rs1800433." evidence="3">
    <original>C</original>
    <variation>Y</variation>
    <location>
        <position position="972"/>
    </location>
</feature>
<feature type="sequence variant" id="VAR_000014" description="In dbSNP:rs669." evidence="5 6 8 9 13">
    <original>I</original>
    <variation>V</variation>
    <location>
        <position position="1000"/>
    </location>
</feature>
<feature type="sequence conflict" description="In Ref. 8; AA sequence." evidence="16" ref="8">
    <location>
        <position position="63"/>
    </location>
</feature>
<feature type="sequence conflict" description="In Ref. 3; AAT02228." evidence="16" ref="3">
    <original>D</original>
    <variation>V</variation>
    <location>
        <position position="82"/>
    </location>
</feature>
<feature type="sequence conflict" description="In Ref. 6; AAH26246." evidence="16" ref="6">
    <original>LSFV</original>
    <variation>ACCS</variation>
    <location>
        <begin position="350"/>
        <end position="353"/>
    </location>
</feature>
<feature type="sequence conflict" description="In Ref. 8; AA sequence." evidence="16" ref="8">
    <original>C</original>
    <variation>E</variation>
    <location>
        <position position="563"/>
    </location>
</feature>
<feature type="sequence conflict" description="In Ref. 4; BAD92851." evidence="16" ref="4">
    <original>A</original>
    <variation>V</variation>
    <location>
        <position position="844"/>
    </location>
</feature>
<feature type="sequence conflict" description="In Ref. 5; CAH18188." evidence="16" ref="5">
    <original>V</original>
    <variation>M</variation>
    <location>
        <position position="872"/>
    </location>
</feature>
<feature type="sequence conflict" description="In Ref. 13; AAA51552." evidence="16" ref="13">
    <original>A</original>
    <variation>D</variation>
    <location>
        <position position="1148"/>
    </location>
</feature>
<feature type="sequence conflict" description="In Ref. 13; AAA51552." evidence="16" ref="13">
    <original>H</original>
    <variation>D</variation>
    <location>
        <position position="1195"/>
    </location>
</feature>
<feature type="strand" evidence="18">
    <location>
        <begin position="128"/>
        <end position="134"/>
    </location>
</feature>
<feature type="strand" evidence="18">
    <location>
        <begin position="136"/>
        <end position="138"/>
    </location>
</feature>
<feature type="strand" evidence="18">
    <location>
        <begin position="143"/>
        <end position="151"/>
    </location>
</feature>
<feature type="helix" evidence="18">
    <location>
        <begin position="153"/>
        <end position="155"/>
    </location>
</feature>
<feature type="strand" evidence="18">
    <location>
        <begin position="161"/>
        <end position="168"/>
    </location>
</feature>
<feature type="strand" evidence="18">
    <location>
        <begin position="174"/>
        <end position="182"/>
    </location>
</feature>
<feature type="strand" evidence="18">
    <location>
        <begin position="187"/>
        <end position="193"/>
    </location>
</feature>
<feature type="strand" evidence="18">
    <location>
        <begin position="201"/>
        <end position="208"/>
    </location>
</feature>
<feature type="strand" evidence="18">
    <location>
        <begin position="214"/>
        <end position="221"/>
    </location>
</feature>
<feature type="strand" evidence="17">
    <location>
        <begin position="1341"/>
        <end position="1347"/>
    </location>
</feature>
<feature type="helix" evidence="17">
    <location>
        <begin position="1355"/>
        <end position="1359"/>
    </location>
</feature>
<feature type="strand" evidence="17">
    <location>
        <begin position="1360"/>
        <end position="1369"/>
    </location>
</feature>
<feature type="strand" evidence="17">
    <location>
        <begin position="1379"/>
        <end position="1384"/>
    </location>
</feature>
<feature type="strand" evidence="17">
    <location>
        <begin position="1389"/>
        <end position="1391"/>
    </location>
</feature>
<feature type="helix" evidence="17">
    <location>
        <begin position="1393"/>
        <end position="1400"/>
    </location>
</feature>
<feature type="turn" evidence="17">
    <location>
        <begin position="1401"/>
        <end position="1403"/>
    </location>
</feature>
<feature type="strand" evidence="17">
    <location>
        <begin position="1407"/>
        <end position="1410"/>
    </location>
</feature>
<feature type="strand" evidence="17">
    <location>
        <begin position="1412"/>
        <end position="1419"/>
    </location>
</feature>
<feature type="strand" evidence="17">
    <location>
        <begin position="1427"/>
        <end position="1434"/>
    </location>
</feature>
<feature type="strand" evidence="17">
    <location>
        <begin position="1445"/>
        <end position="1450"/>
    </location>
</feature>
<feature type="strand" evidence="17">
    <location>
        <begin position="1454"/>
        <end position="1456"/>
    </location>
</feature>
<feature type="strand" evidence="17">
    <location>
        <begin position="1459"/>
        <end position="1463"/>
    </location>
</feature>
<gene>
    <name type="primary">A2M</name>
    <name type="synonym">CPAMD5</name>
    <name type="ORF">FWP007</name>
</gene>
<name>A2MG_HUMAN</name>
<proteinExistence type="evidence at protein level"/>
<accession>P01023</accession>
<accession>Q13677</accession>
<accession>Q59F47</accession>
<accession>Q5QTS0</accession>
<accession>Q68DN2</accession>
<accession>Q6PIY3</accession>
<accession>Q6PN97</accession>
<reference key="1">
    <citation type="journal article" date="1985" name="Proc. Natl. Acad. Sci. U.S.A.">
        <title>Nucleotide sequence of cDNA encoding human alpha 2-macroglobulin and assignment of the chromosomal locus.</title>
        <authorList>
            <person name="Kan C.-C."/>
            <person name="Solomon E."/>
            <person name="Belt K.T."/>
            <person name="Chain A.C."/>
            <person name="Hiorns L.R."/>
            <person name="Fey G.H."/>
        </authorList>
    </citation>
    <scope>NUCLEOTIDE SEQUENCE [MRNA]</scope>
    <scope>VARIANTS ASP-639 AND VAL-1000</scope>
</reference>
<reference key="2">
    <citation type="journal article" date="2005" name="Prostate">
        <title>Alpha(2) macroglobulin, a PSA-binding protein, is expressed in human prostate stroma.</title>
        <authorList>
            <person name="Lin V.K."/>
            <person name="Wang S.-Y."/>
            <person name="Boetticher N.C."/>
            <person name="Vazquez D.V."/>
            <person name="Saboorian H."/>
            <person name="McConnell J.D."/>
            <person name="Roehrborn C.G."/>
        </authorList>
    </citation>
    <scope>NUCLEOTIDE SEQUENCE [MRNA]</scope>
    <scope>VARIANTS ASP-639 AND VAL-1000</scope>
    <source>
        <tissue>Prostate</tissue>
    </source>
</reference>
<reference key="3">
    <citation type="submission" date="2005-03" db="EMBL/GenBank/DDBJ databases">
        <authorList>
            <person name="Totoki Y."/>
            <person name="Toyoda A."/>
            <person name="Takeda T."/>
            <person name="Sakaki Y."/>
            <person name="Tanaka A."/>
            <person name="Yokoyama S."/>
            <person name="Ohara O."/>
            <person name="Nagase T."/>
            <person name="Kikuno R.F."/>
        </authorList>
    </citation>
    <scope>NUCLEOTIDE SEQUENCE [LARGE SCALE MRNA]</scope>
    <scope>VARIANT ASP-639</scope>
    <source>
        <tissue>Spleen</tissue>
    </source>
</reference>
<reference key="4">
    <citation type="journal article" date="2007" name="BMC Genomics">
        <title>The full-ORF clone resource of the German cDNA consortium.</title>
        <authorList>
            <person name="Bechtel S."/>
            <person name="Rosenfelder H."/>
            <person name="Duda A."/>
            <person name="Schmidt C.P."/>
            <person name="Ernst U."/>
            <person name="Wellenreuther R."/>
            <person name="Mehrle A."/>
            <person name="Schuster C."/>
            <person name="Bahr A."/>
            <person name="Bloecker H."/>
            <person name="Heubner D."/>
            <person name="Hoerlein A."/>
            <person name="Michel G."/>
            <person name="Wedler H."/>
            <person name="Koehrer K."/>
            <person name="Ottenwaelder B."/>
            <person name="Poustka A."/>
            <person name="Wiemann S."/>
            <person name="Schupp I."/>
        </authorList>
    </citation>
    <scope>NUCLEOTIDE SEQUENCE [LARGE SCALE MRNA]</scope>
    <scope>VARIANTS ASP-639 AND VAL-1000</scope>
    <source>
        <tissue>Liver</tissue>
    </source>
</reference>
<reference key="5">
    <citation type="journal article" date="2006" name="Nature">
        <title>The finished DNA sequence of human chromosome 12.</title>
        <authorList>
            <person name="Scherer S.E."/>
            <person name="Muzny D.M."/>
            <person name="Buhay C.J."/>
            <person name="Chen R."/>
            <person name="Cree A."/>
            <person name="Ding Y."/>
            <person name="Dugan-Rocha S."/>
            <person name="Gill R."/>
            <person name="Gunaratne P."/>
            <person name="Harris R.A."/>
            <person name="Hawes A.C."/>
            <person name="Hernandez J."/>
            <person name="Hodgson A.V."/>
            <person name="Hume J."/>
            <person name="Jackson A."/>
            <person name="Khan Z.M."/>
            <person name="Kovar-Smith C."/>
            <person name="Lewis L.R."/>
            <person name="Lozado R.J."/>
            <person name="Metzker M.L."/>
            <person name="Milosavljevic A."/>
            <person name="Miner G.R."/>
            <person name="Montgomery K.T."/>
            <person name="Morgan M.B."/>
            <person name="Nazareth L.V."/>
            <person name="Scott G."/>
            <person name="Sodergren E."/>
            <person name="Song X.-Z."/>
            <person name="Steffen D."/>
            <person name="Lovering R.C."/>
            <person name="Wheeler D.A."/>
            <person name="Worley K.C."/>
            <person name="Yuan Y."/>
            <person name="Zhang Z."/>
            <person name="Adams C.Q."/>
            <person name="Ansari-Lari M.A."/>
            <person name="Ayele M."/>
            <person name="Brown M.J."/>
            <person name="Chen G."/>
            <person name="Chen Z."/>
            <person name="Clerc-Blankenburg K.P."/>
            <person name="Davis C."/>
            <person name="Delgado O."/>
            <person name="Dinh H.H."/>
            <person name="Draper H."/>
            <person name="Gonzalez-Garay M.L."/>
            <person name="Havlak P."/>
            <person name="Jackson L.R."/>
            <person name="Jacob L.S."/>
            <person name="Kelly S.H."/>
            <person name="Li L."/>
            <person name="Li Z."/>
            <person name="Liu J."/>
            <person name="Liu W."/>
            <person name="Lu J."/>
            <person name="Maheshwari M."/>
            <person name="Nguyen B.-V."/>
            <person name="Okwuonu G.O."/>
            <person name="Pasternak S."/>
            <person name="Perez L.M."/>
            <person name="Plopper F.J.H."/>
            <person name="Santibanez J."/>
            <person name="Shen H."/>
            <person name="Tabor P.E."/>
            <person name="Verduzco D."/>
            <person name="Waldron L."/>
            <person name="Wang Q."/>
            <person name="Williams G.A."/>
            <person name="Zhang J."/>
            <person name="Zhou J."/>
            <person name="Allen C.C."/>
            <person name="Amin A.G."/>
            <person name="Anyalebechi V."/>
            <person name="Bailey M."/>
            <person name="Barbaria J.A."/>
            <person name="Bimage K.E."/>
            <person name="Bryant N.P."/>
            <person name="Burch P.E."/>
            <person name="Burkett C.E."/>
            <person name="Burrell K.L."/>
            <person name="Calderon E."/>
            <person name="Cardenas V."/>
            <person name="Carter K."/>
            <person name="Casias K."/>
            <person name="Cavazos I."/>
            <person name="Cavazos S.R."/>
            <person name="Ceasar H."/>
            <person name="Chacko J."/>
            <person name="Chan S.N."/>
            <person name="Chavez D."/>
            <person name="Christopoulos C."/>
            <person name="Chu J."/>
            <person name="Cockrell R."/>
            <person name="Cox C.D."/>
            <person name="Dang M."/>
            <person name="Dathorne S.R."/>
            <person name="David R."/>
            <person name="Davis C.M."/>
            <person name="Davy-Carroll L."/>
            <person name="Deshazo D.R."/>
            <person name="Donlin J.E."/>
            <person name="D'Souza L."/>
            <person name="Eaves K.A."/>
            <person name="Egan A."/>
            <person name="Emery-Cohen A.J."/>
            <person name="Escotto M."/>
            <person name="Flagg N."/>
            <person name="Forbes L.D."/>
            <person name="Gabisi A.M."/>
            <person name="Garza M."/>
            <person name="Hamilton C."/>
            <person name="Henderson N."/>
            <person name="Hernandez O."/>
            <person name="Hines S."/>
            <person name="Hogues M.E."/>
            <person name="Huang M."/>
            <person name="Idlebird D.G."/>
            <person name="Johnson R."/>
            <person name="Jolivet A."/>
            <person name="Jones S."/>
            <person name="Kagan R."/>
            <person name="King L.M."/>
            <person name="Leal B."/>
            <person name="Lebow H."/>
            <person name="Lee S."/>
            <person name="LeVan J.M."/>
            <person name="Lewis L.C."/>
            <person name="London P."/>
            <person name="Lorensuhewa L.M."/>
            <person name="Loulseged H."/>
            <person name="Lovett D.A."/>
            <person name="Lucier A."/>
            <person name="Lucier R.L."/>
            <person name="Ma J."/>
            <person name="Madu R.C."/>
            <person name="Mapua P."/>
            <person name="Martindale A.D."/>
            <person name="Martinez E."/>
            <person name="Massey E."/>
            <person name="Mawhiney S."/>
            <person name="Meador M.G."/>
            <person name="Mendez S."/>
            <person name="Mercado C."/>
            <person name="Mercado I.C."/>
            <person name="Merritt C.E."/>
            <person name="Miner Z.L."/>
            <person name="Minja E."/>
            <person name="Mitchell T."/>
            <person name="Mohabbat F."/>
            <person name="Mohabbat K."/>
            <person name="Montgomery B."/>
            <person name="Moore N."/>
            <person name="Morris S."/>
            <person name="Munidasa M."/>
            <person name="Ngo R.N."/>
            <person name="Nguyen N.B."/>
            <person name="Nickerson E."/>
            <person name="Nwaokelemeh O.O."/>
            <person name="Nwokenkwo S."/>
            <person name="Obregon M."/>
            <person name="Oguh M."/>
            <person name="Oragunye N."/>
            <person name="Oviedo R.J."/>
            <person name="Parish B.J."/>
            <person name="Parker D.N."/>
            <person name="Parrish J."/>
            <person name="Parks K.L."/>
            <person name="Paul H.A."/>
            <person name="Payton B.A."/>
            <person name="Perez A."/>
            <person name="Perrin W."/>
            <person name="Pickens A."/>
            <person name="Primus E.L."/>
            <person name="Pu L.-L."/>
            <person name="Puazo M."/>
            <person name="Quiles M.M."/>
            <person name="Quiroz J.B."/>
            <person name="Rabata D."/>
            <person name="Reeves K."/>
            <person name="Ruiz S.J."/>
            <person name="Shao H."/>
            <person name="Sisson I."/>
            <person name="Sonaike T."/>
            <person name="Sorelle R.P."/>
            <person name="Sutton A.E."/>
            <person name="Svatek A.F."/>
            <person name="Svetz L.A."/>
            <person name="Tamerisa K.S."/>
            <person name="Taylor T.R."/>
            <person name="Teague B."/>
            <person name="Thomas N."/>
            <person name="Thorn R.D."/>
            <person name="Trejos Z.Y."/>
            <person name="Trevino B.K."/>
            <person name="Ukegbu O.N."/>
            <person name="Urban J.B."/>
            <person name="Vasquez L.I."/>
            <person name="Vera V.A."/>
            <person name="Villasana D.M."/>
            <person name="Wang L."/>
            <person name="Ward-Moore S."/>
            <person name="Warren J.T."/>
            <person name="Wei X."/>
            <person name="White F."/>
            <person name="Williamson A.L."/>
            <person name="Wleczyk R."/>
            <person name="Wooden H.S."/>
            <person name="Wooden S.H."/>
            <person name="Yen J."/>
            <person name="Yoon L."/>
            <person name="Yoon V."/>
            <person name="Zorrilla S.E."/>
            <person name="Nelson D."/>
            <person name="Kucherlapati R."/>
            <person name="Weinstock G."/>
            <person name="Gibbs R.A."/>
        </authorList>
    </citation>
    <scope>NUCLEOTIDE SEQUENCE [LARGE SCALE GENOMIC DNA]</scope>
</reference>
<reference key="6">
    <citation type="journal article" date="2004" name="Genome Res.">
        <title>The status, quality, and expansion of the NIH full-length cDNA project: the Mammalian Gene Collection (MGC).</title>
        <authorList>
            <consortium name="The MGC Project Team"/>
        </authorList>
    </citation>
    <scope>NUCLEOTIDE SEQUENCE [LARGE SCALE MRNA]</scope>
    <scope>VARIANTS ASP-639 AND VAL-1000</scope>
    <source>
        <tissue>Skin</tissue>
    </source>
</reference>
<reference key="7">
    <citation type="journal article" date="1992" name="Biochem. Biophys. Res. Commun.">
        <title>Structure of the human alpha-2 macroglobulin gene and its promotor.</title>
        <authorList>
            <person name="Matthijs G."/>
            <person name="Devriendt K."/>
            <person name="Cassiman J.-J."/>
            <person name="van den Berghe H."/>
            <person name="Marynen P."/>
        </authorList>
    </citation>
    <scope>NUCLEOTIDE SEQUENCE [GENOMIC DNA] OF 1-29</scope>
    <source>
        <tissue>Placenta</tissue>
    </source>
</reference>
<reference key="8">
    <citation type="journal article" date="1984" name="J. Biol. Chem.">
        <title>Primary structure of human alpha 2-macroglobulin. V. The complete structure.</title>
        <authorList>
            <person name="Sottrup-Jensen L."/>
            <person name="Stepanik T.M."/>
            <person name="Kristensen T."/>
            <person name="Wierzbicki D.M."/>
            <person name="Jones C.M."/>
            <person name="Loenblad P.B."/>
            <person name="Magnusson S."/>
            <person name="Petersen T.E."/>
        </authorList>
    </citation>
    <scope>PROTEIN SEQUENCE OF 24-1474</scope>
    <scope>SUBUNIT</scope>
    <scope>SUBCELLULAR LOCATION</scope>
    <scope>TISSUE SPECIFICITY</scope>
    <scope>DISULFIDE BONDS</scope>
</reference>
<reference key="9">
    <citation type="journal article" date="1985" name="J. Biol. Chem.">
        <authorList>
            <person name="Sottrup-Jensen L."/>
            <person name="Stepanik T.M."/>
            <person name="Kristensen T."/>
            <person name="Wierzbicki D.M."/>
            <person name="Jones C.M."/>
            <person name="Loenblad P.B."/>
            <person name="Magnusson S."/>
            <person name="Petersen T.E."/>
        </authorList>
    </citation>
    <scope>ERRATUM OF PUBMED:6203908</scope>
</reference>
<reference key="10">
    <citation type="journal article" date="1986" name="J. Biol. Chem.">
        <title>Primary structure of human alpha 2-macroglobulin. Complete disulfide bridge assignment and localization of two interchain bridges in the dimeric proteinase binding unit.</title>
        <authorList>
            <person name="Jensen P.E.H."/>
            <person name="Sottrup-Jensen L."/>
        </authorList>
    </citation>
    <scope>PROTEIN SEQUENCE OF 273-286 AND 426-436</scope>
    <scope>DISULFIDE BONDS</scope>
</reference>
<reference key="11">
    <citation type="journal article" date="1990" name="FEBS Lett.">
        <title>A genetic polymorphism in a functional domain of human pregnancy zone protein: the bait region. Genomic structure of the bait domains of human pregnancy zone protein and alpha 2 macroglobulin.</title>
        <authorList>
            <person name="Marynen P."/>
            <person name="Devriendt K."/>
            <person name="van den Berghe H."/>
            <person name="Cassiman J.-J."/>
        </authorList>
    </citation>
    <scope>PROTEIN SEQUENCE OF 672-747</scope>
</reference>
<reference key="12">
    <citation type="journal article" date="1992" name="Hum. Genet.">
        <title>Cloning of the human alpha 2-macroglobulin gene and detection of mutations in two functional domains: the bait region and the thiolester site.</title>
        <authorList>
            <person name="Poller W."/>
            <person name="Faber J.-P."/>
            <person name="Klobeck G."/>
            <person name="Olek K."/>
        </authorList>
    </citation>
    <scope>NUCLEOTIDE SEQUENCE [GENOMIC DNA] OF 672-746</scope>
    <scope>VARIANT TYR-972</scope>
</reference>
<reference key="13">
    <citation type="journal article" date="1985" name="Somat. Cell Mol. Genet.">
        <title>Human alpha 2-macroglobulin gene is located on chromosome 12.</title>
        <authorList>
            <person name="Bell G.I."/>
            <person name="Rall L.B."/>
            <person name="Sanchez-Pescador R."/>
            <person name="Merryweather J.P."/>
            <person name="Scott J."/>
            <person name="Eddy R.L."/>
            <person name="Shows T.B."/>
        </authorList>
    </citation>
    <scope>NUCLEOTIDE SEQUENCE [MRNA] OF 832-1474</scope>
    <source>
        <tissue>Liver</tissue>
    </source>
</reference>
<reference key="14">
    <citation type="submission" date="1998-11" db="EMBL/GenBank/DDBJ databases">
        <authorList>
            <person name="Liu B."/>
            <person name="Zhao B."/>
            <person name="Wang X.Y."/>
            <person name="Xu Y.Y."/>
            <person name="Liu Y.Q."/>
            <person name="Song L."/>
            <person name="Ye J."/>
            <person name="Sheng H."/>
            <person name="Gao Y."/>
            <person name="Zhang C.L."/>
            <person name="Wei Y.J."/>
            <person name="Zhang J."/>
            <person name="Song L."/>
            <person name="Jiang Y.X."/>
            <person name="Zhao Z.W."/>
            <person name="Ding J.F."/>
            <person name="Liu L.S."/>
            <person name="Gao R.L."/>
            <person name="Wu Q.Y."/>
            <person name="Qiang B.Q."/>
            <person name="Yuan J.G."/>
            <person name="Liew C.C."/>
            <person name="Zhao M.S."/>
            <person name="Hui R.T."/>
        </authorList>
    </citation>
    <scope>NUCLEOTIDE SEQUENCE [LARGE SCALE MRNA] OF 1208-1474</scope>
    <source>
        <tissue>Aorta</tissue>
    </source>
</reference>
<reference key="15">
    <citation type="journal article" date="1981" name="Biochem. Biophys. Res. Commun.">
        <title>Proteolytic cleavage sites on alpha 2-macroglobulin resulting in proteinase binding are different for trypsin and Staphylococcus aureus V-8 proteinase.</title>
        <authorList>
            <person name="Hall P.K."/>
            <person name="Nelles L.P."/>
            <person name="Travis J."/>
            <person name="Roberts R.C."/>
        </authorList>
    </citation>
    <scope>INHIBITORY SITE</scope>
</reference>
<reference key="16">
    <citation type="journal article" date="1981" name="FEBS Lett.">
        <title>Primary structure of the 'bait' region for proteinases in alpha 2-macroglobulin. Nature of the complex.</title>
        <authorList>
            <person name="Sottrup-Jensen L."/>
            <person name="Loenblad P.B."/>
            <person name="Stepanik T.M."/>
            <person name="Petersen T.E."/>
            <person name="Magnusson S."/>
            <person name="Joernvall H."/>
        </authorList>
    </citation>
    <scope>INHIBITORY SITE</scope>
</reference>
<reference key="17">
    <citation type="journal article" date="1981" name="FEBS Lett.">
        <title>Primary and secondary cleavage sites in the bait region of alpha 2-macroglobulin.</title>
        <authorList>
            <person name="Mortensen S.B."/>
            <person name="Sottrup-Jensen L."/>
            <person name="Hansen H.F."/>
            <person name="Petersen T.E."/>
            <person name="Magnusson S."/>
        </authorList>
    </citation>
    <scope>INHIBITORY SITE</scope>
</reference>
<reference key="18">
    <citation type="journal article" date="1983" name="Hoppe-Seyler's Z. Physiol. Chem.">
        <title>Human neutrophil elastase and cathepsin G cleavage sites in the bait region of alpha 2-macroglobulin. Proposed structural limits of the bait region.</title>
        <authorList>
            <person name="Virca G.D."/>
            <person name="Salvesen G.S."/>
            <person name="Travis J."/>
        </authorList>
    </citation>
    <scope>INHIBITORY SITE</scope>
</reference>
<reference key="19">
    <citation type="journal article" date="2003" name="Nat. Biotechnol.">
        <title>Identification and quantification of N-linked glycoproteins using hydrazide chemistry, stable isotope labeling and mass spectrometry.</title>
        <authorList>
            <person name="Zhang H."/>
            <person name="Li X.-J."/>
            <person name="Martin D.B."/>
            <person name="Aebersold R."/>
        </authorList>
    </citation>
    <scope>GLYCOSYLATION AT ASN-991</scope>
</reference>
<reference key="20">
    <citation type="journal article" date="2004" name="Proteomics">
        <title>Screening for N-glycosylated proteins by liquid chromatography mass spectrometry.</title>
        <authorList>
            <person name="Bunkenborg J."/>
            <person name="Pilch B.J."/>
            <person name="Podtelejnikov A.V."/>
            <person name="Wisniewski J.R."/>
        </authorList>
    </citation>
    <scope>GLYCOSYLATION [LARGE SCALE ANALYSIS] AT ASN-869 AND ASN-1424</scope>
    <source>
        <tissue>Plasma</tissue>
    </source>
</reference>
<reference key="21">
    <citation type="journal article" date="2005" name="J. Proteome Res.">
        <title>Human plasma N-glycoproteome analysis by immunoaffinity subtraction, hydrazide chemistry, and mass spectrometry.</title>
        <authorList>
            <person name="Liu T."/>
            <person name="Qian W.-J."/>
            <person name="Gritsenko M.A."/>
            <person name="Camp D.G. II"/>
            <person name="Monroe M.E."/>
            <person name="Moore R.J."/>
            <person name="Smith R.D."/>
        </authorList>
    </citation>
    <scope>GLYCOSYLATION [LARGE SCALE ANALYSIS] AT ASN-55; ASN-247; ASN-396; ASN-410; ASN-869; ASN-991 AND ASN-1424</scope>
    <source>
        <tissue>Plasma</tissue>
    </source>
</reference>
<reference key="22">
    <citation type="journal article" date="2009" name="J. Proteome Res.">
        <title>Glycoproteomics analysis of human liver tissue by combination of multiple enzyme digestion and hydrazide chemistry.</title>
        <authorList>
            <person name="Chen R."/>
            <person name="Jiang X."/>
            <person name="Sun D."/>
            <person name="Han G."/>
            <person name="Wang F."/>
            <person name="Ye M."/>
            <person name="Wang L."/>
            <person name="Zou H."/>
        </authorList>
    </citation>
    <scope>GLYCOSYLATION [LARGE SCALE ANALYSIS] AT ASN-396; ASN-991 AND ASN-1424</scope>
    <source>
        <tissue>Liver</tissue>
    </source>
</reference>
<reference key="23">
    <citation type="journal article" date="2009" name="Mol. Cell. Proteomics">
        <title>A strategy for precise and large scale identification of core fucosylated glycoproteins.</title>
        <authorList>
            <person name="Jia W."/>
            <person name="Lu Z."/>
            <person name="Fu Y."/>
            <person name="Wang H.P."/>
            <person name="Wang L.H."/>
            <person name="Chi H."/>
            <person name="Yuan Z.F."/>
            <person name="Zheng Z.B."/>
            <person name="Song L.N."/>
            <person name="Han H.H."/>
            <person name="Liang Y.M."/>
            <person name="Wang J.L."/>
            <person name="Cai Y."/>
            <person name="Zhang Y.K."/>
            <person name="Deng Y.L."/>
            <person name="Ying W.T."/>
            <person name="He S.M."/>
            <person name="Qian X.H."/>
        </authorList>
    </citation>
    <scope>GLYCOSYLATION AT ASN-55 AND ASN-1424</scope>
</reference>
<reference key="24">
    <citation type="journal article" date="2011" name="BMC Syst. Biol.">
        <title>Initial characterization of the human central proteome.</title>
        <authorList>
            <person name="Burkard T.R."/>
            <person name="Planyavsky M."/>
            <person name="Kaupe I."/>
            <person name="Breitwieser F.P."/>
            <person name="Buerckstuemmer T."/>
            <person name="Bennett K.L."/>
            <person name="Superti-Furga G."/>
            <person name="Colinge J."/>
        </authorList>
    </citation>
    <scope>IDENTIFICATION BY MASS SPECTROMETRY [LARGE SCALE ANALYSIS]</scope>
</reference>
<reference key="25">
    <citation type="journal article" date="2014" name="J. Proteomics">
        <title>An enzyme assisted RP-RPLC approach for in-depth analysis of human liver phosphoproteome.</title>
        <authorList>
            <person name="Bian Y."/>
            <person name="Song C."/>
            <person name="Cheng K."/>
            <person name="Dong M."/>
            <person name="Wang F."/>
            <person name="Huang J."/>
            <person name="Sun D."/>
            <person name="Wang L."/>
            <person name="Ye M."/>
            <person name="Zou H."/>
        </authorList>
    </citation>
    <scope>IDENTIFICATION BY MASS SPECTROMETRY [LARGE SCALE ANALYSIS]</scope>
    <source>
        <tissue>Liver</tissue>
    </source>
</reference>
<reference key="26">
    <citation type="journal article" date="1998" name="Protein Sci.">
        <title>Localization of basic residues required for receptor binding to the single alpha-helix of the receptor binding domain of human alpha2-macroglobulin.</title>
        <authorList>
            <person name="Huang W."/>
            <person name="Dolmer K."/>
            <person name="Liao X."/>
            <person name="Gettins P.G.W."/>
        </authorList>
    </citation>
    <scope>STRUCTURE BY NMR OF 1337-1474</scope>
</reference>
<reference key="27">
    <citation type="journal article" date="2007" name="Biochem. J.">
        <title>Human alpha2-macroglobulin is composed of multiple domains, as predicted by homology with complement component C3.</title>
        <authorList>
            <person name="Doan N."/>
            <person name="Gettins P.G.W."/>
        </authorList>
    </citation>
    <scope>X-RAY CRYSTALLOGRAPHY (2.3 ANGSTROMS) OF 126-227</scope>
    <scope>DOMAIN STRUCTURE</scope>
</reference>
<reference key="28">
    <citation type="journal article" date="1991" name="Nucleic Acids Res.">
        <title>Sequence polymorphism in the human alpha2-macroglobulin (A2M) gene.</title>
        <authorList>
            <person name="Poller W."/>
            <person name="Faber J.-P."/>
            <person name="Olek K."/>
        </authorList>
    </citation>
    <scope>VARIANT VAL-1000</scope>
</reference>